<dbReference type="EMBL" id="X93513">
    <property type="protein sequence ID" value="CAA63770.1"/>
    <property type="molecule type" value="Genomic_DNA"/>
</dbReference>
<dbReference type="EMBL" id="BA000036">
    <property type="protein sequence ID" value="BAB98976.1"/>
    <property type="molecule type" value="Genomic_DNA"/>
</dbReference>
<dbReference type="EMBL" id="BX927152">
    <property type="protein sequence ID" value="CAF21591.1"/>
    <property type="molecule type" value="Genomic_DNA"/>
</dbReference>
<dbReference type="RefSeq" id="NP_600797.1">
    <property type="nucleotide sequence ID" value="NC_003450.3"/>
</dbReference>
<dbReference type="RefSeq" id="WP_011014463.1">
    <property type="nucleotide sequence ID" value="NC_006958.1"/>
</dbReference>
<dbReference type="SMR" id="P54146"/>
<dbReference type="STRING" id="196627.cg1785"/>
<dbReference type="TCDB" id="1.A.11.1.2">
    <property type="family name" value="the ammonium transporter channel (amt) family"/>
</dbReference>
<dbReference type="KEGG" id="cgb:cg1785"/>
<dbReference type="KEGG" id="cgl:Cgl1583"/>
<dbReference type="PATRIC" id="fig|196627.13.peg.1544"/>
<dbReference type="eggNOG" id="COG0004">
    <property type="taxonomic scope" value="Bacteria"/>
</dbReference>
<dbReference type="HOGENOM" id="CLU_000445_33_0_11"/>
<dbReference type="OrthoDB" id="9814202at2"/>
<dbReference type="BioCyc" id="CORYNE:G18NG-11168-MONOMER"/>
<dbReference type="Proteomes" id="UP000000582">
    <property type="component" value="Chromosome"/>
</dbReference>
<dbReference type="Proteomes" id="UP000001009">
    <property type="component" value="Chromosome"/>
</dbReference>
<dbReference type="GO" id="GO:0005886">
    <property type="term" value="C:plasma membrane"/>
    <property type="evidence" value="ECO:0007669"/>
    <property type="project" value="UniProtKB-SubCell"/>
</dbReference>
<dbReference type="GO" id="GO:0008519">
    <property type="term" value="F:ammonium channel activity"/>
    <property type="evidence" value="ECO:0007669"/>
    <property type="project" value="InterPro"/>
</dbReference>
<dbReference type="Gene3D" id="1.10.3430.10">
    <property type="entry name" value="Ammonium transporter AmtB like domains"/>
    <property type="match status" value="1"/>
</dbReference>
<dbReference type="InterPro" id="IPR029020">
    <property type="entry name" value="Ammonium/urea_transptr"/>
</dbReference>
<dbReference type="InterPro" id="IPR001905">
    <property type="entry name" value="Ammonium_transpt"/>
</dbReference>
<dbReference type="InterPro" id="IPR018047">
    <property type="entry name" value="Ammonium_transpt_CS"/>
</dbReference>
<dbReference type="InterPro" id="IPR024041">
    <property type="entry name" value="NH4_transpt_AmtB-like_dom"/>
</dbReference>
<dbReference type="NCBIfam" id="TIGR00836">
    <property type="entry name" value="amt"/>
    <property type="match status" value="1"/>
</dbReference>
<dbReference type="PANTHER" id="PTHR43029">
    <property type="entry name" value="AMMONIUM TRANSPORTER MEP2"/>
    <property type="match status" value="1"/>
</dbReference>
<dbReference type="PANTHER" id="PTHR43029:SF10">
    <property type="entry name" value="AMMONIUM TRANSPORTER MEP2"/>
    <property type="match status" value="1"/>
</dbReference>
<dbReference type="Pfam" id="PF00909">
    <property type="entry name" value="Ammonium_transp"/>
    <property type="match status" value="1"/>
</dbReference>
<dbReference type="SUPFAM" id="SSF111352">
    <property type="entry name" value="Ammonium transporter"/>
    <property type="match status" value="1"/>
</dbReference>
<dbReference type="PROSITE" id="PS01219">
    <property type="entry name" value="AMMONIUM_TRANSP"/>
    <property type="match status" value="1"/>
</dbReference>
<organism>
    <name type="scientific">Corynebacterium glutamicum (strain ATCC 13032 / DSM 20300 / JCM 1318 / BCRC 11384 / CCUG 27702 / LMG 3730 / NBRC 12168 / NCIMB 10025 / NRRL B-2784 / 534)</name>
    <dbReference type="NCBI Taxonomy" id="196627"/>
    <lineage>
        <taxon>Bacteria</taxon>
        <taxon>Bacillati</taxon>
        <taxon>Actinomycetota</taxon>
        <taxon>Actinomycetes</taxon>
        <taxon>Mycobacteriales</taxon>
        <taxon>Corynebacteriaceae</taxon>
        <taxon>Corynebacterium</taxon>
    </lineage>
</organism>
<protein>
    <recommendedName>
        <fullName evidence="1">Ammonium transporter</fullName>
    </recommendedName>
    <alternativeName>
        <fullName evidence="1">Ammonia channel</fullName>
    </alternativeName>
    <alternativeName>
        <fullName evidence="1">Ammonium channel</fullName>
    </alternativeName>
</protein>
<keyword id="KW-0924">Ammonia transport</keyword>
<keyword id="KW-1003">Cell membrane</keyword>
<keyword id="KW-0472">Membrane</keyword>
<keyword id="KW-1185">Reference proteome</keyword>
<keyword id="KW-0346">Stress response</keyword>
<keyword id="KW-0812">Transmembrane</keyword>
<keyword id="KW-1133">Transmembrane helix</keyword>
<keyword id="KW-0813">Transport</keyword>
<comment type="function">
    <text evidence="1">Involved in the uptake of ammonium/ammonia (NH(4)(+)/NH(3)).</text>
</comment>
<comment type="subunit">
    <text evidence="1">Homotrimer.</text>
</comment>
<comment type="subcellular location">
    <subcellularLocation>
        <location>Cell membrane</location>
        <topology>Multi-pass membrane protein</topology>
    </subcellularLocation>
</comment>
<comment type="induction">
    <text>By nitrogen starvation.</text>
</comment>
<comment type="similarity">
    <text evidence="3">Belongs to the ammonia transporter channel (TC 1.A.11.2) family.</text>
</comment>
<evidence type="ECO:0000250" key="1">
    <source>
        <dbReference type="UniProtKB" id="P69681"/>
    </source>
</evidence>
<evidence type="ECO:0000255" key="2"/>
<evidence type="ECO:0000305" key="3"/>
<name>AMT_CORGL</name>
<proteinExistence type="evidence at transcript level"/>
<feature type="chain" id="PRO_0000139757" description="Ammonium transporter">
    <location>
        <begin position="1"/>
        <end position="452"/>
    </location>
</feature>
<feature type="transmembrane region" description="Helical" evidence="2">
    <location>
        <begin position="6"/>
        <end position="26"/>
    </location>
</feature>
<feature type="transmembrane region" description="Helical" evidence="2">
    <location>
        <begin position="43"/>
        <end position="63"/>
    </location>
</feature>
<feature type="transmembrane region" description="Helical" evidence="2">
    <location>
        <begin position="94"/>
        <end position="114"/>
    </location>
</feature>
<feature type="transmembrane region" description="Helical" evidence="2">
    <location>
        <begin position="126"/>
        <end position="146"/>
    </location>
</feature>
<feature type="transmembrane region" description="Helical" evidence="2">
    <location>
        <begin position="167"/>
        <end position="187"/>
    </location>
</feature>
<feature type="transmembrane region" description="Helical" evidence="2">
    <location>
        <begin position="201"/>
        <end position="221"/>
    </location>
</feature>
<feature type="transmembrane region" description="Helical" evidence="2">
    <location>
        <begin position="228"/>
        <end position="248"/>
    </location>
</feature>
<feature type="transmembrane region" description="Helical" evidence="2">
    <location>
        <begin position="259"/>
        <end position="279"/>
    </location>
</feature>
<feature type="transmembrane region" description="Helical" evidence="2">
    <location>
        <begin position="282"/>
        <end position="302"/>
    </location>
</feature>
<feature type="transmembrane region" description="Helical" evidence="2">
    <location>
        <begin position="314"/>
        <end position="334"/>
    </location>
</feature>
<feature type="transmembrane region" description="Helical" evidence="2">
    <location>
        <begin position="336"/>
        <end position="356"/>
    </location>
</feature>
<feature type="transmembrane region" description="Helical" evidence="2">
    <location>
        <begin position="360"/>
        <end position="380"/>
    </location>
</feature>
<accession>P54146</accession>
<sequence>MDPSDLAWILAAFALVSLMFPGLSLLYGGMLGGQHVLNTFMMVMSSLGIISLVYIIYGHGLVLGNSIGGWGIIGNPLEYFGFRNIMEDDGTGDLMWAGFYILFAAISLALVSSGAAGRMRFGAWLVFGVLWFTFVYAPLAHWVFAIDDPESGYVGGWMKNVLEFHDFAGGTAVHMNAGASGLALAIVLGRRHSMAVRPHNLPLILIGAGLIVAGWFGFNGGTAGGANFLASYVVVTSLIAAAGGMMGFMLVERVFSGKPTFFGSATGTIAGLVAITPAADAVSPLGAFAVGALGAVVSFWAISWKKGHRVDDSFDVFAVHGMAGIAGALFVMLFGDPLAPAGVSGVFFGGELSLLWREPLAIIVTLTYAFGVTWLIATILNKFMTLRITSEAEYEGIDRAEHAESAYHLNSNGIGMATRTNFGPEIPEETVPDAVQVGVDKQKIADTRKASK</sequence>
<reference key="1">
    <citation type="journal article" date="1996" name="J. Biol. Chem.">
        <title>Functional and genetic characterization of the (methyl)ammonium uptake carrier of Corynebacterium glutamicum.</title>
        <authorList>
            <person name="Siewe R.M."/>
            <person name="Weil B."/>
            <person name="Burkovski A."/>
            <person name="Eikmanns B.J."/>
            <person name="Eikmanns M."/>
            <person name="Kraemer R."/>
        </authorList>
    </citation>
    <scope>NUCLEOTIDE SEQUENCE [GENOMIC DNA]</scope>
    <source>
        <strain>ATCC 13032 / DSM 20300 / JCM 1318 / BCRC 11384 / CCUG 27702 / LMG 3730 / NBRC 12168 / NCIMB 10025 / NRRL B-2784 / 534</strain>
    </source>
</reference>
<reference key="2">
    <citation type="journal article" date="2003" name="Appl. Microbiol. Biotechnol.">
        <title>The Corynebacterium glutamicum genome: features and impacts on biotechnological processes.</title>
        <authorList>
            <person name="Ikeda M."/>
            <person name="Nakagawa S."/>
        </authorList>
    </citation>
    <scope>NUCLEOTIDE SEQUENCE [LARGE SCALE GENOMIC DNA]</scope>
    <source>
        <strain>ATCC 13032 / DSM 20300 / JCM 1318 / BCRC 11384 / CCUG 27702 / LMG 3730 / NBRC 12168 / NCIMB 10025 / NRRL B-2784 / 534</strain>
    </source>
</reference>
<reference key="3">
    <citation type="journal article" date="2003" name="J. Biotechnol.">
        <title>The complete Corynebacterium glutamicum ATCC 13032 genome sequence and its impact on the production of L-aspartate-derived amino acids and vitamins.</title>
        <authorList>
            <person name="Kalinowski J."/>
            <person name="Bathe B."/>
            <person name="Bartels D."/>
            <person name="Bischoff N."/>
            <person name="Bott M."/>
            <person name="Burkovski A."/>
            <person name="Dusch N."/>
            <person name="Eggeling L."/>
            <person name="Eikmanns B.J."/>
            <person name="Gaigalat L."/>
            <person name="Goesmann A."/>
            <person name="Hartmann M."/>
            <person name="Huthmacher K."/>
            <person name="Kraemer R."/>
            <person name="Linke B."/>
            <person name="McHardy A.C."/>
            <person name="Meyer F."/>
            <person name="Moeckel B."/>
            <person name="Pfefferle W."/>
            <person name="Puehler A."/>
            <person name="Rey D.A."/>
            <person name="Rueckert C."/>
            <person name="Rupp O."/>
            <person name="Sahm H."/>
            <person name="Wendisch V.F."/>
            <person name="Wiegraebe I."/>
            <person name="Tauch A."/>
        </authorList>
    </citation>
    <scope>NUCLEOTIDE SEQUENCE [LARGE SCALE GENOMIC DNA]</scope>
    <source>
        <strain>ATCC 13032 / DSM 20300 / JCM 1318 / BCRC 11384 / CCUG 27702 / LMG 3730 / NBRC 12168 / NCIMB 10025 / NRRL B-2784 / 534</strain>
    </source>
</reference>
<reference key="4">
    <citation type="journal article" date="1989" name="Gene">
        <title>Cloning and nucleotide sequence of the phosphoenolpyruvate carboxylase-coding gene of Corynebacterium glutamicum ATCC13032.</title>
        <authorList>
            <person name="O'Regan M."/>
            <person name="Thierbach G."/>
            <person name="Bachmann B."/>
            <person name="Villeval D."/>
            <person name="Lepage P."/>
            <person name="Viret J.F."/>
            <person name="Lemoine Y."/>
        </authorList>
    </citation>
    <scope>NUCLEOTIDE SEQUENCE [GENOMIC DNA] OF 1-148</scope>
    <source>
        <strain>ATCC 13032 / DSM 20300 / JCM 1318 / BCRC 11384 / CCUG 27702 / LMG 3730 / NBRC 12168 / NCIMB 10025 / NRRL B-2784 / 534</strain>
    </source>
</reference>
<gene>
    <name type="primary">amt</name>
    <name type="ordered locus">Cgl1583</name>
    <name type="ordered locus">cg1785</name>
</gene>